<protein>
    <recommendedName>
        <fullName>Flavonol synthase/flavanone 3-hydroxylase</fullName>
        <ecNumber evidence="2">1.14.11.9</ecNumber>
        <ecNumber evidence="2">1.14.20.6</ecNumber>
    </recommendedName>
    <alternativeName>
        <fullName>FLS 1</fullName>
    </alternativeName>
</protein>
<proteinExistence type="evidence at protein level"/>
<dbReference type="EC" id="1.14.11.9" evidence="2"/>
<dbReference type="EC" id="1.14.20.6" evidence="2"/>
<dbReference type="EMBL" id="U72631">
    <property type="protein sequence ID" value="AAB17393.1"/>
    <property type="molecule type" value="Genomic_DNA"/>
</dbReference>
<dbReference type="EMBL" id="U84258">
    <property type="protein sequence ID" value="AAC69362.1"/>
    <property type="molecule type" value="Genomic_DNA"/>
</dbReference>
<dbReference type="EMBL" id="U84259">
    <property type="protein sequence ID" value="AAC69363.1"/>
    <property type="molecule type" value="mRNA"/>
</dbReference>
<dbReference type="EMBL" id="U84260">
    <property type="protein sequence ID" value="AAB41504.1"/>
    <property type="molecule type" value="mRNA"/>
</dbReference>
<dbReference type="EMBL" id="AB006697">
    <property type="protein sequence ID" value="BAB10013.1"/>
    <property type="molecule type" value="Genomic_DNA"/>
</dbReference>
<dbReference type="EMBL" id="CP002688">
    <property type="protein sequence ID" value="AED91332.1"/>
    <property type="molecule type" value="Genomic_DNA"/>
</dbReference>
<dbReference type="EMBL" id="CP002688">
    <property type="protein sequence ID" value="AED91333.1"/>
    <property type="molecule type" value="Genomic_DNA"/>
</dbReference>
<dbReference type="EMBL" id="AY058068">
    <property type="protein sequence ID" value="AAL24176.1"/>
    <property type="molecule type" value="mRNA"/>
</dbReference>
<dbReference type="EMBL" id="BT000494">
    <property type="protein sequence ID" value="AAN18063.1"/>
    <property type="molecule type" value="mRNA"/>
</dbReference>
<dbReference type="EMBL" id="AY086328">
    <property type="protein sequence ID" value="AAM64397.1"/>
    <property type="molecule type" value="mRNA"/>
</dbReference>
<dbReference type="RefSeq" id="NP_001190266.1">
    <property type="nucleotide sequence ID" value="NM_001203337.1"/>
</dbReference>
<dbReference type="RefSeq" id="NP_196481.1">
    <property type="nucleotide sequence ID" value="NM_120951.3"/>
</dbReference>
<dbReference type="SMR" id="Q96330"/>
<dbReference type="BioGRID" id="16043">
    <property type="interactions" value="4"/>
</dbReference>
<dbReference type="FunCoup" id="Q96330">
    <property type="interactions" value="42"/>
</dbReference>
<dbReference type="IntAct" id="Q96330">
    <property type="interactions" value="3"/>
</dbReference>
<dbReference type="MINT" id="Q96330"/>
<dbReference type="STRING" id="3702.Q96330"/>
<dbReference type="GlyGen" id="Q96330">
    <property type="glycosylation" value="1 site"/>
</dbReference>
<dbReference type="PaxDb" id="3702-AT5G08640.1"/>
<dbReference type="ProteomicsDB" id="230035"/>
<dbReference type="EnsemblPlants" id="AT5G08640.1">
    <property type="protein sequence ID" value="AT5G08640.1"/>
    <property type="gene ID" value="AT5G08640"/>
</dbReference>
<dbReference type="EnsemblPlants" id="AT5G08640.2">
    <property type="protein sequence ID" value="AT5G08640.2"/>
    <property type="gene ID" value="AT5G08640"/>
</dbReference>
<dbReference type="GeneID" id="830765"/>
<dbReference type="Gramene" id="AT5G08640.1">
    <property type="protein sequence ID" value="AT5G08640.1"/>
    <property type="gene ID" value="AT5G08640"/>
</dbReference>
<dbReference type="Gramene" id="AT5G08640.2">
    <property type="protein sequence ID" value="AT5G08640.2"/>
    <property type="gene ID" value="AT5G08640"/>
</dbReference>
<dbReference type="KEGG" id="ath:AT5G08640"/>
<dbReference type="Araport" id="AT5G08640"/>
<dbReference type="TAIR" id="AT5G08640">
    <property type="gene designation" value="FLS1"/>
</dbReference>
<dbReference type="eggNOG" id="KOG0143">
    <property type="taxonomic scope" value="Eukaryota"/>
</dbReference>
<dbReference type="HOGENOM" id="CLU_010119_16_2_1"/>
<dbReference type="InParanoid" id="Q96330"/>
<dbReference type="OMA" id="MAEYMMK"/>
<dbReference type="OrthoDB" id="288590at2759"/>
<dbReference type="PhylomeDB" id="Q96330"/>
<dbReference type="BRENDA" id="1.14.20.6">
    <property type="organism ID" value="399"/>
</dbReference>
<dbReference type="SABIO-RK" id="Q96330"/>
<dbReference type="UniPathway" id="UPA00154"/>
<dbReference type="PRO" id="PR:Q96330"/>
<dbReference type="Proteomes" id="UP000006548">
    <property type="component" value="Chromosome 5"/>
</dbReference>
<dbReference type="ExpressionAtlas" id="Q96330">
    <property type="expression patterns" value="baseline and differential"/>
</dbReference>
<dbReference type="GO" id="GO:0005737">
    <property type="term" value="C:cytoplasm"/>
    <property type="evidence" value="ECO:0007669"/>
    <property type="project" value="UniProtKB-SubCell"/>
</dbReference>
<dbReference type="GO" id="GO:0005634">
    <property type="term" value="C:nucleus"/>
    <property type="evidence" value="ECO:0007669"/>
    <property type="project" value="UniProtKB-SubCell"/>
</dbReference>
<dbReference type="GO" id="GO:0045486">
    <property type="term" value="F:flavanone 3-dioxygenase activity"/>
    <property type="evidence" value="ECO:0007669"/>
    <property type="project" value="UniProtKB-EC"/>
</dbReference>
<dbReference type="GO" id="GO:0045431">
    <property type="term" value="F:flavonol synthase activity"/>
    <property type="evidence" value="ECO:0000314"/>
    <property type="project" value="TAIR"/>
</dbReference>
<dbReference type="GO" id="GO:0031418">
    <property type="term" value="F:L-ascorbic acid binding"/>
    <property type="evidence" value="ECO:0007669"/>
    <property type="project" value="UniProtKB-KW"/>
</dbReference>
<dbReference type="GO" id="GO:0046872">
    <property type="term" value="F:metal ion binding"/>
    <property type="evidence" value="ECO:0007669"/>
    <property type="project" value="UniProtKB-KW"/>
</dbReference>
<dbReference type="GO" id="GO:0009813">
    <property type="term" value="P:flavonoid biosynthetic process"/>
    <property type="evidence" value="ECO:0000314"/>
    <property type="project" value="TAIR"/>
</dbReference>
<dbReference type="GO" id="GO:0009733">
    <property type="term" value="P:response to auxin"/>
    <property type="evidence" value="ECO:0000270"/>
    <property type="project" value="TAIR"/>
</dbReference>
<dbReference type="FunFam" id="2.60.120.330:FF:000009">
    <property type="entry name" value="Flavonol synthase"/>
    <property type="match status" value="1"/>
</dbReference>
<dbReference type="Gene3D" id="2.60.120.330">
    <property type="entry name" value="B-lactam Antibiotic, Isopenicillin N Synthase, Chain"/>
    <property type="match status" value="1"/>
</dbReference>
<dbReference type="InterPro" id="IPR026992">
    <property type="entry name" value="DIOX_N"/>
</dbReference>
<dbReference type="InterPro" id="IPR044861">
    <property type="entry name" value="IPNS-like_FE2OG_OXY"/>
</dbReference>
<dbReference type="InterPro" id="IPR027443">
    <property type="entry name" value="IPNS-like_sf"/>
</dbReference>
<dbReference type="InterPro" id="IPR050231">
    <property type="entry name" value="Iron_ascorbate_oxido_reductase"/>
</dbReference>
<dbReference type="InterPro" id="IPR005123">
    <property type="entry name" value="Oxoglu/Fe-dep_dioxygenase_dom"/>
</dbReference>
<dbReference type="PANTHER" id="PTHR47990">
    <property type="entry name" value="2-OXOGLUTARATE (2OG) AND FE(II)-DEPENDENT OXYGENASE SUPERFAMILY PROTEIN-RELATED"/>
    <property type="match status" value="1"/>
</dbReference>
<dbReference type="Pfam" id="PF03171">
    <property type="entry name" value="2OG-FeII_Oxy"/>
    <property type="match status" value="1"/>
</dbReference>
<dbReference type="Pfam" id="PF14226">
    <property type="entry name" value="DIOX_N"/>
    <property type="match status" value="1"/>
</dbReference>
<dbReference type="SUPFAM" id="SSF51197">
    <property type="entry name" value="Clavaminate synthase-like"/>
    <property type="match status" value="1"/>
</dbReference>
<dbReference type="PROSITE" id="PS51471">
    <property type="entry name" value="FE2OG_OXY"/>
    <property type="match status" value="1"/>
</dbReference>
<comment type="function">
    <text evidence="6 8 9 10 11 12 13 15 17">Catalyzes the formation of flavonols from dihydroflavonols. It can act on dihydrokaempferol to produce kaempferol, on dihydroquercetin to produce quercitin and on dihydromyricetin to produce myricetin. In vitro catalyzes the oxidation of both enantiomers of naringenin to give both cis- and trans-dihydrokaempferol.</text>
</comment>
<comment type="catalytic activity">
    <reaction evidence="2">
        <text>a (2R,3R)-dihydroflavonol + 2-oxoglutarate + O2 = a flavonol + succinate + CO2 + H2O</text>
        <dbReference type="Rhea" id="RHEA:21088"/>
        <dbReference type="ChEBI" id="CHEBI:15377"/>
        <dbReference type="ChEBI" id="CHEBI:15379"/>
        <dbReference type="ChEBI" id="CHEBI:16526"/>
        <dbReference type="ChEBI" id="CHEBI:16810"/>
        <dbReference type="ChEBI" id="CHEBI:28802"/>
        <dbReference type="ChEBI" id="CHEBI:30031"/>
        <dbReference type="ChEBI" id="CHEBI:138188"/>
        <dbReference type="EC" id="1.14.20.6"/>
    </reaction>
</comment>
<comment type="catalytic activity">
    <reaction evidence="2">
        <text>a (2S)-flavan-4-one + 2-oxoglutarate + O2 = a (2R,3R)-dihydroflavonol + succinate + CO2</text>
        <dbReference type="Rhea" id="RHEA:18621"/>
        <dbReference type="ChEBI" id="CHEBI:15379"/>
        <dbReference type="ChEBI" id="CHEBI:16526"/>
        <dbReference type="ChEBI" id="CHEBI:16810"/>
        <dbReference type="ChEBI" id="CHEBI:30031"/>
        <dbReference type="ChEBI" id="CHEBI:138188"/>
        <dbReference type="ChEBI" id="CHEBI:140377"/>
        <dbReference type="EC" id="1.14.11.9"/>
    </reaction>
</comment>
<comment type="cofactor">
    <cofactor evidence="1">
        <name>L-ascorbate</name>
        <dbReference type="ChEBI" id="CHEBI:38290"/>
    </cofactor>
    <text evidence="1">Binds 1 ascorbate molecule per subunit.</text>
</comment>
<comment type="cofactor">
    <cofactor evidence="18">
        <name>Fe(2+)</name>
        <dbReference type="ChEBI" id="CHEBI:29033"/>
    </cofactor>
    <text evidence="18">Binds 1 Fe(2+) ion per subunit.</text>
</comment>
<comment type="biophysicochemical properties">
    <kinetics>
        <KM evidence="10">59 uM for dihydroquercetin</KM>
    </kinetics>
</comment>
<comment type="pathway">
    <text>Secondary metabolite biosynthesis; flavonoid biosynthesis.</text>
</comment>
<comment type="interaction">
    <interactant intactId="EBI-1774454">
        <id>Q96330</id>
    </interactant>
    <interactant intactId="EBI-1546775">
        <id>P13114</id>
        <label>CHS</label>
    </interactant>
    <organismsDiffer>false</organismsDiffer>
    <experiments>3</experiments>
</comment>
<comment type="subcellular location">
    <subcellularLocation>
        <location evidence="15">Cytoplasm</location>
    </subcellularLocation>
    <subcellularLocation>
        <location evidence="15">Nucleus</location>
    </subcellularLocation>
</comment>
<comment type="tissue specificity">
    <text evidence="5 7 11 15">Expressed in young seedlings (at protein level). Expressed in roots, emerging leaves, shoot-root transition zone, trichomes, flowers and siliques. In cotyledons, expressed mostly on the adaxial side and only in guard cells on the abaxial side.</text>
</comment>
<comment type="induction">
    <text evidence="7 14 16 17">By light, auxin and 1-aminocyclopropane-1-carboxylic acid (ACC).</text>
</comment>
<comment type="disruption phenotype">
    <text evidence="11 12 17">Accumulation of anthocyanins and glycosylated forms of dihydroflavonols, and drastic reduction of kaempferol, quercitin and favonol glycosides.</text>
</comment>
<comment type="similarity">
    <text evidence="18">Belongs to the iron/ascorbate-dependent oxidoreductase family.</text>
</comment>
<keyword id="KW-0963">Cytoplasm</keyword>
<keyword id="KW-0223">Dioxygenase</keyword>
<keyword id="KW-0284">Flavonoid biosynthesis</keyword>
<keyword id="KW-0408">Iron</keyword>
<keyword id="KW-0479">Metal-binding</keyword>
<keyword id="KW-0539">Nucleus</keyword>
<keyword id="KW-0560">Oxidoreductase</keyword>
<keyword id="KW-1185">Reference proteome</keyword>
<keyword id="KW-0847">Vitamin C</keyword>
<gene>
    <name type="primary">FLS1</name>
    <name type="synonym">FLS</name>
    <name type="ordered locus">At5g08640</name>
    <name type="ORF">MAH20.20</name>
</gene>
<reference key="1">
    <citation type="journal article" date="1997" name="Plant Physiol.">
        <title>Characterization of flavonol synthase and leucoanthocyanidin dioxygenase genes in Arabidopsis. Further evidence for differential regulation of 'early' and 'late' genes.</title>
        <authorList>
            <person name="Pelletier M.K."/>
            <person name="Murrell J.R."/>
            <person name="Shirley B.W."/>
        </authorList>
    </citation>
    <scope>NUCLEOTIDE SEQUENCE [GENOMIC DNA]</scope>
    <scope>INDUCTION BY LIGHT</scope>
    <source>
        <strain>cv. Landsberg erecta</strain>
    </source>
</reference>
<reference key="2">
    <citation type="journal article" date="1998" name="Proc. Natl. Acad. Sci. U.S.A.">
        <title>Knock-out mutants from an En-1 mutagenized Arabidopsis thaliana population generate phenylpropanoid biosynthesis phenotypes.</title>
        <authorList>
            <person name="Wisman E."/>
            <person name="Hartmann U."/>
            <person name="Sagasser M."/>
            <person name="Baumann E."/>
            <person name="Palme K."/>
            <person name="Hahlbrock K."/>
            <person name="Saedler H."/>
            <person name="Weisshaar B."/>
        </authorList>
    </citation>
    <scope>NUCLEOTIDE SEQUENCE [GENOMIC DNA / MRNA]</scope>
    <scope>FUNCTION</scope>
    <scope>INDUCTION BY LIGHT</scope>
    <scope>DISRUPTION PHENOTYPE</scope>
    <source>
        <strain>cv. Columbia</strain>
        <strain>cv. Landsberg erecta</strain>
    </source>
</reference>
<reference key="3">
    <citation type="journal article" date="1997" name="DNA Res.">
        <title>Structural analysis of Arabidopsis thaliana chromosome 5. II. Sequence features of the regions of 1,044,062 bp covered by thirteen physically assigned P1 clones.</title>
        <authorList>
            <person name="Kotani H."/>
            <person name="Nakamura Y."/>
            <person name="Sato S."/>
            <person name="Kaneko T."/>
            <person name="Asamizu E."/>
            <person name="Miyajima N."/>
            <person name="Tabata S."/>
        </authorList>
    </citation>
    <scope>NUCLEOTIDE SEQUENCE [LARGE SCALE GENOMIC DNA]</scope>
    <source>
        <strain>cv. Columbia</strain>
    </source>
</reference>
<reference key="4">
    <citation type="journal article" date="2017" name="Plant J.">
        <title>Araport11: a complete reannotation of the Arabidopsis thaliana reference genome.</title>
        <authorList>
            <person name="Cheng C.Y."/>
            <person name="Krishnakumar V."/>
            <person name="Chan A.P."/>
            <person name="Thibaud-Nissen F."/>
            <person name="Schobel S."/>
            <person name="Town C.D."/>
        </authorList>
    </citation>
    <scope>GENOME REANNOTATION</scope>
    <source>
        <strain>cv. Columbia</strain>
    </source>
</reference>
<reference key="5">
    <citation type="journal article" date="2003" name="Science">
        <title>Empirical analysis of transcriptional activity in the Arabidopsis genome.</title>
        <authorList>
            <person name="Yamada K."/>
            <person name="Lim J."/>
            <person name="Dale J.M."/>
            <person name="Chen H."/>
            <person name="Shinn P."/>
            <person name="Palm C.J."/>
            <person name="Southwick A.M."/>
            <person name="Wu H.C."/>
            <person name="Kim C.J."/>
            <person name="Nguyen M."/>
            <person name="Pham P.K."/>
            <person name="Cheuk R.F."/>
            <person name="Karlin-Newmann G."/>
            <person name="Liu S.X."/>
            <person name="Lam B."/>
            <person name="Sakano H."/>
            <person name="Wu T."/>
            <person name="Yu G."/>
            <person name="Miranda M."/>
            <person name="Quach H.L."/>
            <person name="Tripp M."/>
            <person name="Chang C.H."/>
            <person name="Lee J.M."/>
            <person name="Toriumi M.J."/>
            <person name="Chan M.M."/>
            <person name="Tang C.C."/>
            <person name="Onodera C.S."/>
            <person name="Deng J.M."/>
            <person name="Akiyama K."/>
            <person name="Ansari Y."/>
            <person name="Arakawa T."/>
            <person name="Banh J."/>
            <person name="Banno F."/>
            <person name="Bowser L."/>
            <person name="Brooks S.Y."/>
            <person name="Carninci P."/>
            <person name="Chao Q."/>
            <person name="Choy N."/>
            <person name="Enju A."/>
            <person name="Goldsmith A.D."/>
            <person name="Gurjal M."/>
            <person name="Hansen N.F."/>
            <person name="Hayashizaki Y."/>
            <person name="Johnson-Hopson C."/>
            <person name="Hsuan V.W."/>
            <person name="Iida K."/>
            <person name="Karnes M."/>
            <person name="Khan S."/>
            <person name="Koesema E."/>
            <person name="Ishida J."/>
            <person name="Jiang P.X."/>
            <person name="Jones T."/>
            <person name="Kawai J."/>
            <person name="Kamiya A."/>
            <person name="Meyers C."/>
            <person name="Nakajima M."/>
            <person name="Narusaka M."/>
            <person name="Seki M."/>
            <person name="Sakurai T."/>
            <person name="Satou M."/>
            <person name="Tamse R."/>
            <person name="Vaysberg M."/>
            <person name="Wallender E.K."/>
            <person name="Wong C."/>
            <person name="Yamamura Y."/>
            <person name="Yuan S."/>
            <person name="Shinozaki K."/>
            <person name="Davis R.W."/>
            <person name="Theologis A."/>
            <person name="Ecker J.R."/>
        </authorList>
    </citation>
    <scope>NUCLEOTIDE SEQUENCE [LARGE SCALE MRNA]</scope>
    <source>
        <strain>cv. Columbia</strain>
    </source>
</reference>
<reference key="6">
    <citation type="submission" date="2002-03" db="EMBL/GenBank/DDBJ databases">
        <title>Full-length cDNA from Arabidopsis thaliana.</title>
        <authorList>
            <person name="Brover V.V."/>
            <person name="Troukhan M.E."/>
            <person name="Alexandrov N.A."/>
            <person name="Lu Y.-P."/>
            <person name="Flavell R.B."/>
            <person name="Feldmann K.A."/>
        </authorList>
    </citation>
    <scope>NUCLEOTIDE SEQUENCE [LARGE SCALE MRNA]</scope>
</reference>
<reference key="7">
    <citation type="journal article" date="1999" name="Plant Mol. Biol.">
        <title>Disruption of specific flavonoid genes enhances the accumulation of flavonoid enzymes and end-products in Arabidopsis seedlings.</title>
        <authorList>
            <person name="Pelletier M.K."/>
            <person name="Burbulis I.E."/>
            <person name="Winkel-Shirley B."/>
        </authorList>
    </citation>
    <scope>TISSUE SPECIFICITY</scope>
</reference>
<reference key="8">
    <citation type="journal article" date="2002" name="Phytochemistry">
        <title>In vitro properties of a recombinant flavonol synthase from Arabidopsis thaliana.</title>
        <authorList>
            <person name="Prescott A.G."/>
            <person name="Stamford N.P."/>
            <person name="Wheeler G."/>
            <person name="Firmin J.L."/>
        </authorList>
    </citation>
    <scope>FUNCTION</scope>
    <scope>CATALYTIC ACTIVITY</scope>
</reference>
<reference key="9">
    <citation type="journal article" date="2005" name="FEBS Lett.">
        <title>Incorporation of oxygen into the succinate co-product of iron(II) and 2-oxoglutarate dependent oxygenases from bacteria, plants and humans.</title>
        <authorList>
            <person name="Welford R.W."/>
            <person name="Kirkpatrick J.M."/>
            <person name="McNeill L.A."/>
            <person name="Puri M."/>
            <person name="Oldham N.J."/>
            <person name="Schofield C.J."/>
        </authorList>
    </citation>
    <scope>FUNCTION</scope>
    <scope>CATALYTIC ACTIVITY</scope>
</reference>
<reference key="10">
    <citation type="journal article" date="2005" name="Plant Mol. Biol.">
        <title>Differential combinatorial interactions of cis-acting elements recognized by R2R3-MYB, BZIP, and BHLH factors control light-responsive and tissue-specific activation of phenylpropanoid biosynthesis genes.</title>
        <authorList>
            <person name="Hartmann U."/>
            <person name="Sagasser M."/>
            <person name="Mehrtens F."/>
            <person name="Stracke R."/>
            <person name="Weisshaar B."/>
        </authorList>
    </citation>
    <scope>TISSUE SPECIFICITY</scope>
    <scope>INDUCTION</scope>
</reference>
<reference key="11">
    <citation type="journal article" date="2005" name="Org. Biomol. Chem.">
        <title>Structural and mechanistic studies on anthocyanidin synthase catalysed oxidation of flavanone substrates: the effect of C-2 stereochemistry on product selectivity and mechanism.</title>
        <authorList>
            <person name="Welford R.W."/>
            <person name="Clifton I.J."/>
            <person name="Turnbull J.J."/>
            <person name="Wilson S.C."/>
            <person name="Schofield C.J."/>
        </authorList>
    </citation>
    <scope>FUNCTION</scope>
    <scope>MUTAGENESIS OF HIS-132 AND LYS-329</scope>
</reference>
<reference key="12">
    <citation type="journal article" date="2008" name="Phytochemistry">
        <title>Elucidation of active site residues of Arabidopsis thaliana flavonol synthase provides a molecular platform for engineering flavonols.</title>
        <authorList>
            <person name="Chua C.S."/>
            <person name="Biermann D."/>
            <person name="Goo K.S."/>
            <person name="Sim T.S."/>
        </authorList>
    </citation>
    <scope>FUNCTION</scope>
    <scope>BIOPHYSICOCHEMICAL PROPERTIES</scope>
    <scope>MUTAGENESIS OF HIS-132; PHE-134; LYS-202; HIS-221; ASP-223; HIS-277; ARG-287; SER-289; PHE-293 AND GLU-295</scope>
</reference>
<reference key="13">
    <citation type="journal article" date="2008" name="Plant Physiol.">
        <title>Functional analysis of a predicted flavonol synthase gene family in Arabidopsis.</title>
        <authorList>
            <person name="Owens D.K."/>
            <person name="Alerding A.B."/>
            <person name="Crosby K.C."/>
            <person name="Bandara A.B."/>
            <person name="Westwood J.H."/>
            <person name="Winkel B.S."/>
        </authorList>
    </citation>
    <scope>FUNCTION</scope>
    <scope>TISSUE SPECIFICITY</scope>
    <scope>GENE FAMILY</scope>
    <scope>NOMENCLATURE</scope>
    <scope>DISRUPTION PHENOTYPE</scope>
    <source>
        <strain>cv. Wassilewskija</strain>
    </source>
</reference>
<reference key="14">
    <citation type="journal article" date="2009" name="FEBS Lett.">
        <title>Arabidopsis thaliana expresses a second functional flavonol synthase.</title>
        <authorList>
            <person name="Preuss A."/>
            <person name="Stracke R."/>
            <person name="Weisshaar B."/>
            <person name="Hillebrecht A."/>
            <person name="Matern U."/>
            <person name="Martens S."/>
        </authorList>
    </citation>
    <scope>FUNCTION</scope>
</reference>
<reference key="15">
    <citation type="journal article" date="2009" name="Planta">
        <title>Metabolomic and genetic analyses of flavonol synthesis in Arabidopsis thaliana support the in vivo involvement of leucoanthocyanidin dioxygenase.</title>
        <authorList>
            <person name="Stracke R."/>
            <person name="De Vos R.C."/>
            <person name="Bartelniewoehner L."/>
            <person name="Ishihara H."/>
            <person name="Sagasser M."/>
            <person name="Martens S."/>
            <person name="Weisshaar B."/>
        </authorList>
    </citation>
    <scope>FUNCTION</scope>
    <scope>DISRUPTION PHENOTYPE</scope>
    <source>
        <strain>cv. No-0</strain>
    </source>
</reference>
<reference key="16">
    <citation type="journal article" date="2011" name="Plant Physiol.">
        <title>Auxin and ethylene induce flavonol accumulation through distinct transcriptional networks.</title>
        <authorList>
            <person name="Lewis D.R."/>
            <person name="Ramirez M.V."/>
            <person name="Miller N.D."/>
            <person name="Vallabhaneni P."/>
            <person name="Ray W.K."/>
            <person name="Helm R.F."/>
            <person name="Winkel B.S."/>
            <person name="Muday G.K."/>
        </authorList>
    </citation>
    <scope>INDUCTION</scope>
</reference>
<reference key="17">
    <citation type="journal article" date="2011" name="Plant Physiol.">
        <title>Flavonols accumulate asymmetrically and affect auxin transport in Arabidopsis.</title>
        <authorList>
            <person name="Kuhn B.M."/>
            <person name="Geisler M."/>
            <person name="Bigler L."/>
            <person name="Ringli C."/>
        </authorList>
    </citation>
    <scope>FUNCTION</scope>
    <scope>SUBCELLULAR LOCATION</scope>
    <scope>TISSUE SPECIFICITY</scope>
</reference>
<reference key="18">
    <citation type="journal article" date="2013" name="Plant Physiol. Biochem.">
        <title>The flavonoid biosynthetic pathway in Arabidopsis: Structural and genetic diversity.</title>
        <authorList>
            <person name="Saito K."/>
            <person name="Yonekura-Sakakibara K."/>
            <person name="Nakabayashi R."/>
            <person name="Higashi Y."/>
            <person name="Yamazaki M."/>
            <person name="Tohge T."/>
            <person name="Fernie A.R."/>
        </authorList>
    </citation>
    <scope>REVIEW</scope>
    <scope>NOMENCLATURE</scope>
</reference>
<name>FLS1_ARATH</name>
<organism>
    <name type="scientific">Arabidopsis thaliana</name>
    <name type="common">Mouse-ear cress</name>
    <dbReference type="NCBI Taxonomy" id="3702"/>
    <lineage>
        <taxon>Eukaryota</taxon>
        <taxon>Viridiplantae</taxon>
        <taxon>Streptophyta</taxon>
        <taxon>Embryophyta</taxon>
        <taxon>Tracheophyta</taxon>
        <taxon>Spermatophyta</taxon>
        <taxon>Magnoliopsida</taxon>
        <taxon>eudicotyledons</taxon>
        <taxon>Gunneridae</taxon>
        <taxon>Pentapetalae</taxon>
        <taxon>rosids</taxon>
        <taxon>malvids</taxon>
        <taxon>Brassicales</taxon>
        <taxon>Brassicaceae</taxon>
        <taxon>Camelineae</taxon>
        <taxon>Arabidopsis</taxon>
    </lineage>
</organism>
<sequence>MEVERVQDISSSSLLTEAIPLEFIRSEKEQPAITTFRGPTPAIPVVDLSDPDEESVRRAVVKASEEWGLFQVVNHGIPTELIRRLQDVGRKFFELPSSEKESVAKPEDSKDIEGYGTKLQKDPEGKKAWVDHLFHRIWPPSCVNYRFWPKNPPEYREVNEEYAVHVKKLSETLLGILSDGLGLKRDALKEGLGGEMAEYMMKINYYPPCPRPDLALGVPAHTDLSGITLLVPNEVPGLQVFKDDHWFDAEYIPSAVIVHIGDQILRLSNGRYKNVLHRTTVDKEKTRMSWPVFLEPPREKIVGPLPELTGDDNPPKFKPFAFKDYSYRKLNKLPLD</sequence>
<evidence type="ECO:0000250" key="1"/>
<evidence type="ECO:0000250" key="2">
    <source>
        <dbReference type="UniProtKB" id="Q7XZQ6"/>
    </source>
</evidence>
<evidence type="ECO:0000255" key="3">
    <source>
        <dbReference type="PROSITE-ProRule" id="PRU00805"/>
    </source>
</evidence>
<evidence type="ECO:0000256" key="4">
    <source>
        <dbReference type="SAM" id="MobiDB-lite"/>
    </source>
</evidence>
<evidence type="ECO:0000269" key="5">
    <source>
    </source>
</evidence>
<evidence type="ECO:0000269" key="6">
    <source>
    </source>
</evidence>
<evidence type="ECO:0000269" key="7">
    <source>
    </source>
</evidence>
<evidence type="ECO:0000269" key="8">
    <source>
    </source>
</evidence>
<evidence type="ECO:0000269" key="9">
    <source>
    </source>
</evidence>
<evidence type="ECO:0000269" key="10">
    <source>
    </source>
</evidence>
<evidence type="ECO:0000269" key="11">
    <source>
    </source>
</evidence>
<evidence type="ECO:0000269" key="12">
    <source>
    </source>
</evidence>
<evidence type="ECO:0000269" key="13">
    <source>
    </source>
</evidence>
<evidence type="ECO:0000269" key="14">
    <source>
    </source>
</evidence>
<evidence type="ECO:0000269" key="15">
    <source>
    </source>
</evidence>
<evidence type="ECO:0000269" key="16">
    <source>
    </source>
</evidence>
<evidence type="ECO:0000269" key="17">
    <source>
    </source>
</evidence>
<evidence type="ECO:0000305" key="18"/>
<accession>Q96330</accession>
<accession>O04730</accession>
<accession>O04731</accession>
<accession>O04732</accession>
<accession>O04830</accession>
<accession>O04831</accession>
<accession>O04832</accession>
<feature type="chain" id="PRO_0000067291" description="Flavonol synthase/flavanone 3-hydroxylase">
    <location>
        <begin position="1"/>
        <end position="336"/>
    </location>
</feature>
<feature type="domain" description="Fe2OG dioxygenase" evidence="3">
    <location>
        <begin position="196"/>
        <end position="296"/>
    </location>
</feature>
<feature type="region of interest" description="Disordered" evidence="4">
    <location>
        <begin position="99"/>
        <end position="118"/>
    </location>
</feature>
<feature type="binding site" evidence="1">
    <location>
        <begin position="204"/>
        <end position="206"/>
    </location>
    <ligand>
        <name>2-oxoglutarate</name>
        <dbReference type="ChEBI" id="CHEBI:16810"/>
    </ligand>
</feature>
<feature type="binding site" evidence="18">
    <location>
        <position position="221"/>
    </location>
    <ligand>
        <name>Fe cation</name>
        <dbReference type="ChEBI" id="CHEBI:24875"/>
        <note>catalytic</note>
    </ligand>
</feature>
<feature type="binding site" evidence="18">
    <location>
        <position position="223"/>
    </location>
    <ligand>
        <name>Fe cation</name>
        <dbReference type="ChEBI" id="CHEBI:24875"/>
        <note>catalytic</note>
    </ligand>
</feature>
<feature type="binding site" evidence="18">
    <location>
        <position position="277"/>
    </location>
    <ligand>
        <name>Fe cation</name>
        <dbReference type="ChEBI" id="CHEBI:24875"/>
        <note>catalytic</note>
    </ligand>
</feature>
<feature type="binding site" evidence="18">
    <location>
        <begin position="287"/>
        <end position="289"/>
    </location>
    <ligand>
        <name>2-oxoglutarate</name>
        <dbReference type="ChEBI" id="CHEBI:16810"/>
    </ligand>
</feature>
<feature type="mutagenesis site" description="Slightly increases activity." evidence="8 10">
    <original>H</original>
    <variation>F</variation>
    <location>
        <position position="132"/>
    </location>
</feature>
<feature type="mutagenesis site" description="Slightly decreases activity." evidence="8 10">
    <original>H</original>
    <variation>Y</variation>
    <location>
        <position position="132"/>
    </location>
</feature>
<feature type="mutagenesis site" description="Reduces activity 7-fold." evidence="10">
    <original>F</original>
    <variation>A</variation>
    <location>
        <position position="134"/>
    </location>
</feature>
<feature type="mutagenesis site" description="Reduces activity 2-fold." evidence="10">
    <original>F</original>
    <variation>L</variation>
    <location>
        <position position="134"/>
    </location>
</feature>
<feature type="mutagenesis site" description="Reduces activity 25-fold." evidence="10">
    <original>K</original>
    <variation>M</variation>
    <location>
        <position position="202"/>
    </location>
</feature>
<feature type="mutagenesis site" description="Reduces activity 8-fold." evidence="10">
    <original>K</original>
    <variation>R</variation>
    <location>
        <position position="202"/>
    </location>
</feature>
<feature type="mutagenesis site" description="Loss of activity." evidence="10">
    <original>H</original>
    <variation>W</variation>
    <location>
        <position position="221"/>
    </location>
</feature>
<feature type="mutagenesis site" description="Loss of activity." evidence="10">
    <original>D</original>
    <variation>E</variation>
    <location>
        <position position="223"/>
    </location>
</feature>
<feature type="mutagenesis site" description="Loss of activity." evidence="10">
    <original>H</original>
    <variation>F</variation>
    <location>
        <position position="277"/>
    </location>
</feature>
<feature type="mutagenesis site" description="Loss of activity." evidence="10">
    <original>R</original>
    <variation>K</variation>
    <location>
        <position position="287"/>
    </location>
</feature>
<feature type="mutagenesis site" description="Reduces activity 2-fold." evidence="10">
    <original>S</original>
    <variation>T</variation>
    <location>
        <position position="289"/>
    </location>
</feature>
<feature type="mutagenesis site" description="Reduces activity 12-fold." evidence="10">
    <original>F</original>
    <variation>A</variation>
    <variation>L</variation>
    <location>
        <position position="293"/>
    </location>
</feature>
<feature type="mutagenesis site" description="Reduces activity 15-fold." evidence="10">
    <original>E</original>
    <variation>L</variation>
    <location>
        <position position="295"/>
    </location>
</feature>
<feature type="mutagenesis site" description="Reduces activity 2-fold." evidence="10">
    <original>E</original>
    <variation>Q</variation>
    <location>
        <position position="295"/>
    </location>
</feature>
<feature type="mutagenesis site" description="Reduces activity 4-fold." evidence="8">
    <original>K</original>
    <variation>N</variation>
    <location>
        <position position="329"/>
    </location>
</feature>